<proteinExistence type="evidence at transcript level"/>
<protein>
    <recommendedName>
        <fullName>Nicotinamide phosphoribosyltransferase</fullName>
        <shortName>NAmPRTase</shortName>
        <shortName>Nampt</shortName>
        <ecNumber evidence="3">2.4.2.12</ecNumber>
    </recommendedName>
    <alternativeName>
        <fullName>Pre-B-cell colony-enhancing factor 1 homolog</fullName>
        <shortName>PBEF</shortName>
    </alternativeName>
    <alternativeName>
        <fullName>Visfatin</fullName>
    </alternativeName>
</protein>
<gene>
    <name type="primary">NAMPT</name>
    <name type="synonym">PBEF1</name>
</gene>
<keyword id="KW-0007">Acetylation</keyword>
<keyword id="KW-0090">Biological rhythms</keyword>
<keyword id="KW-0202">Cytokine</keyword>
<keyword id="KW-0963">Cytoplasm</keyword>
<keyword id="KW-0328">Glycosyltransferase</keyword>
<keyword id="KW-0539">Nucleus</keyword>
<keyword id="KW-0597">Phosphoprotein</keyword>
<keyword id="KW-0662">Pyridine nucleotide biosynthesis</keyword>
<keyword id="KW-1185">Reference proteome</keyword>
<keyword id="KW-0964">Secreted</keyword>
<keyword id="KW-0808">Transferase</keyword>
<name>NAMPT_PIG</name>
<organism>
    <name type="scientific">Sus scrofa</name>
    <name type="common">Pig</name>
    <dbReference type="NCBI Taxonomy" id="9823"/>
    <lineage>
        <taxon>Eukaryota</taxon>
        <taxon>Metazoa</taxon>
        <taxon>Chordata</taxon>
        <taxon>Craniata</taxon>
        <taxon>Vertebrata</taxon>
        <taxon>Euteleostomi</taxon>
        <taxon>Mammalia</taxon>
        <taxon>Eutheria</taxon>
        <taxon>Laurasiatheria</taxon>
        <taxon>Artiodactyla</taxon>
        <taxon>Suina</taxon>
        <taxon>Suidae</taxon>
        <taxon>Sus</taxon>
    </lineage>
</organism>
<reference key="1">
    <citation type="submission" date="2005-04" db="EMBL/GenBank/DDBJ databases">
        <title>Cloning and expression of porcine visfatin.</title>
        <authorList>
            <person name="Liu B.-H."/>
            <person name="Ding S.-T."/>
        </authorList>
    </citation>
    <scope>NUCLEOTIDE SEQUENCE [MRNA]</scope>
</reference>
<reference key="2">
    <citation type="submission" date="2005-07" db="EMBL/GenBank/DDBJ databases">
        <authorList>
            <person name="Chen H."/>
            <person name="Yang Z."/>
        </authorList>
    </citation>
    <scope>NUCLEOTIDE SEQUENCE [MRNA]</scope>
</reference>
<sequence length="491" mass="55374">MNAAAEAEFNILLATDSYKVTHYKQYPPNTSKVYSYFECREKKTENSKIRKVKYEETVFYGLQYILNKYLKGKVVTKEKIQEAKEVYKEHFQDDVFNEKGWNYILEKYDGHLPIEVKAVPEGSVIPRGNVLFTVENTDPECYWLTNWIETILVQSWYPITVATNSREQKKILAKYLLETSGNLDGLEYKLHDFGYRGVSSQETAGIGASAHLVNFKGTDTVAGIALIKKYYGTKDPVPGYSVPAAEHSTITAWGKDHEKDAFEHIVTQFSSVPVSVVSDSYDIYNACEKIWGEDLRHLIVSRSTEAPLIIRPDSGNPLDTVLKVLDILGKKFPVTENSKGYKLLPPYLRVIQGDGVDINTLQEIVEGMKQKKWSIENIAFGSGGALLQKLTRDLLNCSFKCSYVVTNGLGINVFKDPVADPNKRSKKGRLSLHRTPGGNFVTLEEGKGDLEEYGHDLLHTVFKNGKVTKSYSFDEVRKNAQLNIELEAAPH</sequence>
<comment type="function">
    <text evidence="2 3">Catalyzes the condensation of nicotinamide with 5-phosphoribosyl-1-pyrophosphate to yield nicotinamide mononucleotide, an intermediate in the biosynthesis of NAD. It is the rate limiting component in the mammalian NAD biosynthesis pathway. The secreted form behaves both as a cytokine with immunomodulating properties and an adipokine with anti-diabetic properties, it has no enzymatic activity, partly because of lack of activation by ATP, which has a low level in extracellular space and plasma. Plays a role in the modulation of circadian clock function. Plays a role in the modulation of circadian clock function. NAMPT-dependent oscillatory production of NAD regulates oscillation of clock target gene expression by releasing the core clock component: CLOCK-BMAL1 heterodimer from NAD-dependent SIRT1-mediated suppression.</text>
</comment>
<comment type="catalytic activity">
    <reaction evidence="3">
        <text>beta-nicotinamide D-ribonucleotide + diphosphate = 5-phospho-alpha-D-ribose 1-diphosphate + nicotinamide + H(+)</text>
        <dbReference type="Rhea" id="RHEA:16149"/>
        <dbReference type="ChEBI" id="CHEBI:14649"/>
        <dbReference type="ChEBI" id="CHEBI:15378"/>
        <dbReference type="ChEBI" id="CHEBI:17154"/>
        <dbReference type="ChEBI" id="CHEBI:33019"/>
        <dbReference type="ChEBI" id="CHEBI:58017"/>
        <dbReference type="EC" id="2.4.2.12"/>
    </reaction>
    <physiologicalReaction direction="right-to-left" evidence="3">
        <dbReference type="Rhea" id="RHEA:16151"/>
    </physiologicalReaction>
</comment>
<comment type="pathway">
    <text>Cofactor biosynthesis; NAD(+) biosynthesis; nicotinamide D-ribonucleotide from 5-phospho-alpha-D-ribose 1-diphosphate and nicotinamide: step 1/1.</text>
</comment>
<comment type="subunit">
    <text evidence="2">Homodimer.</text>
</comment>
<comment type="subcellular location">
    <subcellularLocation>
        <location evidence="2">Nucleus</location>
    </subcellularLocation>
    <subcellularLocation>
        <location evidence="3">Cytoplasm</location>
    </subcellularLocation>
    <subcellularLocation>
        <location evidence="2">Secreted</location>
    </subcellularLocation>
    <text evidence="2">Under non-inflammatory conditions, visfatin predominantly exhibits a granular pattern within the nucleus. Secreted by endothelial cells upon IL-1beta stimulation. Abundantly secreted in milk, reaching 100-fold higher concentrations compared to maternal serum.</text>
</comment>
<comment type="similarity">
    <text evidence="4">Belongs to the NAPRTase family.</text>
</comment>
<feature type="chain" id="PRO_0000205865" description="Nicotinamide phosphoribosyltransferase">
    <location>
        <begin position="1"/>
        <end position="491"/>
    </location>
</feature>
<feature type="binding site" evidence="1">
    <location>
        <position position="196"/>
    </location>
    <ligand>
        <name>diphosphate</name>
        <dbReference type="ChEBI" id="CHEBI:33019"/>
    </ligand>
</feature>
<feature type="binding site" evidence="1">
    <location>
        <position position="219"/>
    </location>
    <ligand>
        <name>beta-nicotinamide D-ribonucleotide</name>
        <dbReference type="ChEBI" id="CHEBI:14649"/>
    </ligand>
</feature>
<feature type="binding site" evidence="1">
    <location>
        <position position="247"/>
    </location>
    <ligand>
        <name>diphosphate</name>
        <dbReference type="ChEBI" id="CHEBI:33019"/>
    </ligand>
</feature>
<feature type="binding site" evidence="1">
    <location>
        <begin position="311"/>
        <end position="313"/>
    </location>
    <ligand>
        <name>beta-nicotinamide D-ribonucleotide</name>
        <dbReference type="ChEBI" id="CHEBI:14649"/>
    </ligand>
</feature>
<feature type="binding site" evidence="1">
    <location>
        <position position="311"/>
    </location>
    <ligand>
        <name>diphosphate</name>
        <dbReference type="ChEBI" id="CHEBI:33019"/>
    </ligand>
</feature>
<feature type="binding site" evidence="1">
    <location>
        <begin position="353"/>
        <end position="354"/>
    </location>
    <ligand>
        <name>beta-nicotinamide D-ribonucleotide</name>
        <dbReference type="ChEBI" id="CHEBI:14649"/>
    </ligand>
</feature>
<feature type="binding site" evidence="1">
    <location>
        <position position="384"/>
    </location>
    <ligand>
        <name>beta-nicotinamide D-ribonucleotide</name>
        <dbReference type="ChEBI" id="CHEBI:14649"/>
    </ligand>
</feature>
<feature type="binding site" evidence="1">
    <location>
        <position position="392"/>
    </location>
    <ligand>
        <name>beta-nicotinamide D-ribonucleotide</name>
        <dbReference type="ChEBI" id="CHEBI:14649"/>
    </ligand>
</feature>
<feature type="modified residue" description="N-acetylmethionine" evidence="2">
    <location>
        <position position="1"/>
    </location>
</feature>
<feature type="modified residue" description="Phosphotyrosine" evidence="2">
    <location>
        <position position="188"/>
    </location>
</feature>
<feature type="modified residue" description="Phosphoserine" evidence="2">
    <location>
        <position position="472"/>
    </location>
</feature>
<accession>Q52I78</accession>
<accession>Q3I6K8</accession>
<dbReference type="EC" id="2.4.2.12" evidence="3"/>
<dbReference type="EMBL" id="DQ020218">
    <property type="protein sequence ID" value="AAY89036.1"/>
    <property type="molecule type" value="mRNA"/>
</dbReference>
<dbReference type="EMBL" id="DQ001974">
    <property type="protein sequence ID" value="AAY18209.2"/>
    <property type="molecule type" value="mRNA"/>
</dbReference>
<dbReference type="RefSeq" id="NP_001026963.1">
    <property type="nucleotide sequence ID" value="NM_001031793.2"/>
</dbReference>
<dbReference type="RefSeq" id="XP_005667778.1">
    <property type="nucleotide sequence ID" value="XM_005667721.2"/>
</dbReference>
<dbReference type="SMR" id="Q52I78"/>
<dbReference type="FunCoup" id="Q52I78">
    <property type="interactions" value="809"/>
</dbReference>
<dbReference type="STRING" id="9823.ENSSSCP00000043109"/>
<dbReference type="PaxDb" id="9823-ENSSSCP00000016366"/>
<dbReference type="PeptideAtlas" id="Q52I78"/>
<dbReference type="Ensembl" id="ENSSSCT00000016815.5">
    <property type="protein sequence ID" value="ENSSSCP00000016366.4"/>
    <property type="gene ID" value="ENSSSCG00000015435.5"/>
</dbReference>
<dbReference type="Ensembl" id="ENSSSCT00015027285.1">
    <property type="protein sequence ID" value="ENSSSCP00015010680.1"/>
    <property type="gene ID" value="ENSSSCG00015020619.1"/>
</dbReference>
<dbReference type="Ensembl" id="ENSSSCT00025073146.1">
    <property type="protein sequence ID" value="ENSSSCP00025031692.1"/>
    <property type="gene ID" value="ENSSSCG00025052770.1"/>
</dbReference>
<dbReference type="Ensembl" id="ENSSSCT00030036653.1">
    <property type="protein sequence ID" value="ENSSSCP00030016758.1"/>
    <property type="gene ID" value="ENSSSCG00030026152.1"/>
</dbReference>
<dbReference type="Ensembl" id="ENSSSCT00035085702.1">
    <property type="protein sequence ID" value="ENSSSCP00035035670.1"/>
    <property type="gene ID" value="ENSSSCG00035063648.1"/>
</dbReference>
<dbReference type="Ensembl" id="ENSSSCT00040104251.1">
    <property type="protein sequence ID" value="ENSSSCP00040047452.1"/>
    <property type="gene ID" value="ENSSSCG00040075208.1"/>
</dbReference>
<dbReference type="Ensembl" id="ENSSSCT00045063220.1">
    <property type="protein sequence ID" value="ENSSSCP00045044570.1"/>
    <property type="gene ID" value="ENSSSCG00045036681.1"/>
</dbReference>
<dbReference type="Ensembl" id="ENSSSCT00050050316.1">
    <property type="protein sequence ID" value="ENSSSCP00050021045.1"/>
    <property type="gene ID" value="ENSSSCG00050037351.1"/>
</dbReference>
<dbReference type="Ensembl" id="ENSSSCT00055050900.1">
    <property type="protein sequence ID" value="ENSSSCP00055040693.1"/>
    <property type="gene ID" value="ENSSSCG00055025329.1"/>
</dbReference>
<dbReference type="Ensembl" id="ENSSSCT00060100116.1">
    <property type="protein sequence ID" value="ENSSSCP00060043441.1"/>
    <property type="gene ID" value="ENSSSCG00060072321.1"/>
</dbReference>
<dbReference type="Ensembl" id="ENSSSCT00065059675.1">
    <property type="protein sequence ID" value="ENSSSCP00065025888.1"/>
    <property type="gene ID" value="ENSSSCG00065043557.1"/>
</dbReference>
<dbReference type="Ensembl" id="ENSSSCT00070043855.1">
    <property type="protein sequence ID" value="ENSSSCP00070036932.1"/>
    <property type="gene ID" value="ENSSSCG00070022024.1"/>
</dbReference>
<dbReference type="Ensembl" id="ENSSSCT00085041790">
    <property type="protein sequence ID" value="ENSSSCP00085029192"/>
    <property type="gene ID" value="ENSSSCG00085021859"/>
</dbReference>
<dbReference type="Ensembl" id="ENSSSCT00090035498">
    <property type="protein sequence ID" value="ENSSSCP00090022188"/>
    <property type="gene ID" value="ENSSSCG00090019946"/>
</dbReference>
<dbReference type="Ensembl" id="ENSSSCT00105006219">
    <property type="protein sequence ID" value="ENSSSCP00105004529"/>
    <property type="gene ID" value="ENSSSCG00105003128"/>
</dbReference>
<dbReference type="Ensembl" id="ENSSSCT00110019878">
    <property type="protein sequence ID" value="ENSSSCP00110013477"/>
    <property type="gene ID" value="ENSSSCG00110010253"/>
</dbReference>
<dbReference type="Ensembl" id="ENSSSCT00115006506">
    <property type="protein sequence ID" value="ENSSSCP00115006088"/>
    <property type="gene ID" value="ENSSSCG00115003734"/>
</dbReference>
<dbReference type="Ensembl" id="ENSSSCT00130030009">
    <property type="protein sequence ID" value="ENSSSCP00130020633"/>
    <property type="gene ID" value="ENSSSCG00130015099"/>
</dbReference>
<dbReference type="GeneID" id="595123"/>
<dbReference type="KEGG" id="ssc:595123"/>
<dbReference type="CTD" id="10135"/>
<dbReference type="VGNC" id="VGNC:90573">
    <property type="gene designation" value="NAMPT"/>
</dbReference>
<dbReference type="eggNOG" id="ENOG502QSGN">
    <property type="taxonomic scope" value="Eukaryota"/>
</dbReference>
<dbReference type="GeneTree" id="ENSGT00940000153456"/>
<dbReference type="HOGENOM" id="CLU_012550_2_0_1"/>
<dbReference type="InParanoid" id="Q52I78"/>
<dbReference type="OrthoDB" id="193380at2759"/>
<dbReference type="TreeFam" id="TF333530"/>
<dbReference type="Reactome" id="R-SSC-197264">
    <property type="pathway name" value="Nicotinamide salvaging"/>
</dbReference>
<dbReference type="UniPathway" id="UPA00253">
    <property type="reaction ID" value="UER00890"/>
</dbReference>
<dbReference type="Proteomes" id="UP000008227">
    <property type="component" value="Chromosome 9"/>
</dbReference>
<dbReference type="Proteomes" id="UP000314985">
    <property type="component" value="Chromosome 9"/>
</dbReference>
<dbReference type="Proteomes" id="UP000694570">
    <property type="component" value="Unplaced"/>
</dbReference>
<dbReference type="Proteomes" id="UP000694571">
    <property type="component" value="Unplaced"/>
</dbReference>
<dbReference type="Proteomes" id="UP000694720">
    <property type="component" value="Unplaced"/>
</dbReference>
<dbReference type="Proteomes" id="UP000694722">
    <property type="component" value="Unplaced"/>
</dbReference>
<dbReference type="Proteomes" id="UP000694723">
    <property type="component" value="Unplaced"/>
</dbReference>
<dbReference type="Proteomes" id="UP000694724">
    <property type="component" value="Unplaced"/>
</dbReference>
<dbReference type="Proteomes" id="UP000694725">
    <property type="component" value="Unplaced"/>
</dbReference>
<dbReference type="Proteomes" id="UP000694726">
    <property type="component" value="Unplaced"/>
</dbReference>
<dbReference type="Proteomes" id="UP000694727">
    <property type="component" value="Unplaced"/>
</dbReference>
<dbReference type="Proteomes" id="UP000694728">
    <property type="component" value="Unplaced"/>
</dbReference>
<dbReference type="Bgee" id="ENSSSCG00000015435">
    <property type="expression patterns" value="Expressed in muscle tissue and 44 other cell types or tissues"/>
</dbReference>
<dbReference type="ExpressionAtlas" id="Q52I78">
    <property type="expression patterns" value="baseline and differential"/>
</dbReference>
<dbReference type="GO" id="GO:0005737">
    <property type="term" value="C:cytoplasm"/>
    <property type="evidence" value="ECO:0007669"/>
    <property type="project" value="UniProtKB-SubCell"/>
</dbReference>
<dbReference type="GO" id="GO:0005615">
    <property type="term" value="C:extracellular space"/>
    <property type="evidence" value="ECO:0007669"/>
    <property type="project" value="UniProtKB-KW"/>
</dbReference>
<dbReference type="GO" id="GO:0005634">
    <property type="term" value="C:nucleus"/>
    <property type="evidence" value="ECO:0007669"/>
    <property type="project" value="UniProtKB-SubCell"/>
</dbReference>
<dbReference type="GO" id="GO:0005125">
    <property type="term" value="F:cytokine activity"/>
    <property type="evidence" value="ECO:0007669"/>
    <property type="project" value="UniProtKB-KW"/>
</dbReference>
<dbReference type="GO" id="GO:0047280">
    <property type="term" value="F:nicotinamide phosphoribosyltransferase activity"/>
    <property type="evidence" value="ECO:0000318"/>
    <property type="project" value="GO_Central"/>
</dbReference>
<dbReference type="GO" id="GO:0032922">
    <property type="term" value="P:circadian regulation of gene expression"/>
    <property type="evidence" value="ECO:0000250"/>
    <property type="project" value="UniProtKB"/>
</dbReference>
<dbReference type="GO" id="GO:0009435">
    <property type="term" value="P:NAD biosynthetic process"/>
    <property type="evidence" value="ECO:0000318"/>
    <property type="project" value="GO_Central"/>
</dbReference>
<dbReference type="CDD" id="cd01569">
    <property type="entry name" value="PBEF_like"/>
    <property type="match status" value="1"/>
</dbReference>
<dbReference type="FunFam" id="3.20.20.70:FF:000080">
    <property type="entry name" value="Nicotinamide phosphoribosyltransferase"/>
    <property type="match status" value="1"/>
</dbReference>
<dbReference type="Gene3D" id="3.20.20.70">
    <property type="entry name" value="Aldolase class I"/>
    <property type="match status" value="1"/>
</dbReference>
<dbReference type="InterPro" id="IPR013785">
    <property type="entry name" value="Aldolase_TIM"/>
</dbReference>
<dbReference type="InterPro" id="IPR041529">
    <property type="entry name" value="DUF5598"/>
</dbReference>
<dbReference type="InterPro" id="IPR041525">
    <property type="entry name" value="N/Namide_PRibTrfase"/>
</dbReference>
<dbReference type="InterPro" id="IPR016471">
    <property type="entry name" value="Nicotinamide_PRibTrfase"/>
</dbReference>
<dbReference type="InterPro" id="IPR036068">
    <property type="entry name" value="Nicotinate_pribotase-like_C"/>
</dbReference>
<dbReference type="NCBIfam" id="NF006629">
    <property type="entry name" value="PRK09198.1"/>
    <property type="match status" value="1"/>
</dbReference>
<dbReference type="PANTHER" id="PTHR43816">
    <property type="entry name" value="NICOTINAMIDE PHOSPHORIBOSYLTRANSFERASE"/>
    <property type="match status" value="1"/>
</dbReference>
<dbReference type="PANTHER" id="PTHR43816:SF1">
    <property type="entry name" value="NICOTINAMIDE PHOSPHORIBOSYLTRANSFERASE"/>
    <property type="match status" value="1"/>
</dbReference>
<dbReference type="Pfam" id="PF18127">
    <property type="entry name" value="NAMPT_N"/>
    <property type="match status" value="1"/>
</dbReference>
<dbReference type="Pfam" id="PF04095">
    <property type="entry name" value="NAPRTase"/>
    <property type="match status" value="1"/>
</dbReference>
<dbReference type="PIRSF" id="PIRSF005943">
    <property type="entry name" value="NMPRT"/>
    <property type="match status" value="1"/>
</dbReference>
<dbReference type="SUPFAM" id="SSF51690">
    <property type="entry name" value="Nicotinate/Quinolinate PRTase C-terminal domain-like"/>
    <property type="match status" value="1"/>
</dbReference>
<evidence type="ECO:0000250" key="1"/>
<evidence type="ECO:0000250" key="2">
    <source>
        <dbReference type="UniProtKB" id="P43490"/>
    </source>
</evidence>
<evidence type="ECO:0000250" key="3">
    <source>
        <dbReference type="UniProtKB" id="Q99KQ4"/>
    </source>
</evidence>
<evidence type="ECO:0000305" key="4"/>